<dbReference type="EMBL" id="CP001037">
    <property type="protein sequence ID" value="ACC80369.1"/>
    <property type="molecule type" value="Genomic_DNA"/>
</dbReference>
<dbReference type="RefSeq" id="WP_012408387.1">
    <property type="nucleotide sequence ID" value="NC_010628.1"/>
</dbReference>
<dbReference type="SMR" id="B2J1K8"/>
<dbReference type="STRING" id="63737.Npun_R1698"/>
<dbReference type="EnsemblBacteria" id="ACC80369">
    <property type="protein sequence ID" value="ACC80369"/>
    <property type="gene ID" value="Npun_R1698"/>
</dbReference>
<dbReference type="KEGG" id="npu:Npun_R1698"/>
<dbReference type="eggNOG" id="COG1799">
    <property type="taxonomic scope" value="Bacteria"/>
</dbReference>
<dbReference type="HOGENOM" id="CLU_078499_1_1_3"/>
<dbReference type="OrthoDB" id="9815206at2"/>
<dbReference type="PhylomeDB" id="B2J1K8"/>
<dbReference type="Proteomes" id="UP000001191">
    <property type="component" value="Chromosome"/>
</dbReference>
<dbReference type="GO" id="GO:0005737">
    <property type="term" value="C:cytoplasm"/>
    <property type="evidence" value="ECO:0007669"/>
    <property type="project" value="UniProtKB-SubCell"/>
</dbReference>
<dbReference type="GO" id="GO:0000917">
    <property type="term" value="P:division septum assembly"/>
    <property type="evidence" value="ECO:0007669"/>
    <property type="project" value="UniProtKB-KW"/>
</dbReference>
<dbReference type="GO" id="GO:0043093">
    <property type="term" value="P:FtsZ-dependent cytokinesis"/>
    <property type="evidence" value="ECO:0007669"/>
    <property type="project" value="UniProtKB-UniRule"/>
</dbReference>
<dbReference type="Gene3D" id="3.30.110.150">
    <property type="entry name" value="SepF-like protein"/>
    <property type="match status" value="1"/>
</dbReference>
<dbReference type="HAMAP" id="MF_01197">
    <property type="entry name" value="SepF"/>
    <property type="match status" value="1"/>
</dbReference>
<dbReference type="InterPro" id="IPR023052">
    <property type="entry name" value="Cell_div_SepF"/>
</dbReference>
<dbReference type="InterPro" id="IPR007561">
    <property type="entry name" value="Cell_div_SepF/SepF-rel"/>
</dbReference>
<dbReference type="InterPro" id="IPR038594">
    <property type="entry name" value="SepF-like_sf"/>
</dbReference>
<dbReference type="PANTHER" id="PTHR35798">
    <property type="entry name" value="CELL DIVISION PROTEIN SEPF"/>
    <property type="match status" value="1"/>
</dbReference>
<dbReference type="PANTHER" id="PTHR35798:SF1">
    <property type="entry name" value="CELL DIVISION PROTEIN SEPF"/>
    <property type="match status" value="1"/>
</dbReference>
<dbReference type="Pfam" id="PF04472">
    <property type="entry name" value="SepF"/>
    <property type="match status" value="1"/>
</dbReference>
<feature type="chain" id="PRO_1000138475" description="Cell division protein SepF">
    <location>
        <begin position="1"/>
        <end position="200"/>
    </location>
</feature>
<feature type="region of interest" description="Disordered" evidence="2">
    <location>
        <begin position="35"/>
        <end position="60"/>
    </location>
</feature>
<feature type="region of interest" description="Disordered" evidence="2">
    <location>
        <begin position="170"/>
        <end position="200"/>
    </location>
</feature>
<feature type="compositionally biased region" description="Polar residues" evidence="2">
    <location>
        <begin position="183"/>
        <end position="200"/>
    </location>
</feature>
<gene>
    <name evidence="1" type="primary">sepF</name>
    <name type="ordered locus">Npun_R1698</name>
</gene>
<comment type="function">
    <text evidence="1">Cell division protein that is part of the divisome complex and is recruited early to the Z-ring. Probably stimulates Z-ring formation, perhaps through the cross-linking of FtsZ protofilaments. Its function overlaps with FtsA.</text>
</comment>
<comment type="subunit">
    <text evidence="1">Homodimer. Interacts with FtsZ.</text>
</comment>
<comment type="subcellular location">
    <subcellularLocation>
        <location evidence="1">Cytoplasm</location>
    </subcellularLocation>
    <text evidence="1">Localizes to the division site, in a FtsZ-dependent manner.</text>
</comment>
<comment type="similarity">
    <text evidence="1">Belongs to the SepF family.</text>
</comment>
<evidence type="ECO:0000255" key="1">
    <source>
        <dbReference type="HAMAP-Rule" id="MF_01197"/>
    </source>
</evidence>
<evidence type="ECO:0000256" key="2">
    <source>
        <dbReference type="SAM" id="MobiDB-lite"/>
    </source>
</evidence>
<sequence length="200" mass="22287">MNNIFSKLRDFVGLNEQVEYEYYEEEPETDNNYQNLYQQENPQPPAPQESATAQNRRWREPVPTMGDDIAAGSKPMGNVIGMPGAINGISEVLVLEPRTFEEMPQAIQALRERKSVVLNLTIMDPDQAQRAVDFVAGGTYALDGHQERIGESIFLFTPSCVQVSTQGGVLHEVPQPPARPSRPTGSPNQTWGNETNRMAQ</sequence>
<protein>
    <recommendedName>
        <fullName evidence="1">Cell division protein SepF</fullName>
    </recommendedName>
</protein>
<accession>B2J1K8</accession>
<proteinExistence type="inferred from homology"/>
<reference key="1">
    <citation type="journal article" date="2013" name="Plant Physiol.">
        <title>A Nostoc punctiforme Sugar Transporter Necessary to Establish a Cyanobacterium-Plant Symbiosis.</title>
        <authorList>
            <person name="Ekman M."/>
            <person name="Picossi S."/>
            <person name="Campbell E.L."/>
            <person name="Meeks J.C."/>
            <person name="Flores E."/>
        </authorList>
    </citation>
    <scope>NUCLEOTIDE SEQUENCE [LARGE SCALE GENOMIC DNA]</scope>
    <source>
        <strain>ATCC 29133 / PCC 73102</strain>
    </source>
</reference>
<keyword id="KW-0131">Cell cycle</keyword>
<keyword id="KW-0132">Cell division</keyword>
<keyword id="KW-0963">Cytoplasm</keyword>
<keyword id="KW-1185">Reference proteome</keyword>
<keyword id="KW-0717">Septation</keyword>
<name>SEPF_NOSP7</name>
<organism>
    <name type="scientific">Nostoc punctiforme (strain ATCC 29133 / PCC 73102)</name>
    <dbReference type="NCBI Taxonomy" id="63737"/>
    <lineage>
        <taxon>Bacteria</taxon>
        <taxon>Bacillati</taxon>
        <taxon>Cyanobacteriota</taxon>
        <taxon>Cyanophyceae</taxon>
        <taxon>Nostocales</taxon>
        <taxon>Nostocaceae</taxon>
        <taxon>Nostoc</taxon>
    </lineage>
</organism>